<organism>
    <name type="scientific">Escherichia coli (strain K12 / DH10B)</name>
    <dbReference type="NCBI Taxonomy" id="316385"/>
    <lineage>
        <taxon>Bacteria</taxon>
        <taxon>Pseudomonadati</taxon>
        <taxon>Pseudomonadota</taxon>
        <taxon>Gammaproteobacteria</taxon>
        <taxon>Enterobacterales</taxon>
        <taxon>Enterobacteriaceae</taxon>
        <taxon>Escherichia</taxon>
    </lineage>
</organism>
<protein>
    <recommendedName>
        <fullName evidence="1">UPF0149 protein YgfB</fullName>
    </recommendedName>
</protein>
<name>YGFB_ECODH</name>
<accession>B1XEJ5</accession>
<reference key="1">
    <citation type="journal article" date="2008" name="J. Bacteriol.">
        <title>The complete genome sequence of Escherichia coli DH10B: insights into the biology of a laboratory workhorse.</title>
        <authorList>
            <person name="Durfee T."/>
            <person name="Nelson R."/>
            <person name="Baldwin S."/>
            <person name="Plunkett G. III"/>
            <person name="Burland V."/>
            <person name="Mau B."/>
            <person name="Petrosino J.F."/>
            <person name="Qin X."/>
            <person name="Muzny D.M."/>
            <person name="Ayele M."/>
            <person name="Gibbs R.A."/>
            <person name="Csorgo B."/>
            <person name="Posfai G."/>
            <person name="Weinstock G.M."/>
            <person name="Blattner F.R."/>
        </authorList>
    </citation>
    <scope>NUCLEOTIDE SEQUENCE [LARGE SCALE GENOMIC DNA]</scope>
    <source>
        <strain>K12 / DH10B</strain>
    </source>
</reference>
<comment type="similarity">
    <text evidence="1">Belongs to the UPF0149 family.</text>
</comment>
<feature type="chain" id="PRO_1000120470" description="UPF0149 protein YgfB">
    <location>
        <begin position="1"/>
        <end position="192"/>
    </location>
</feature>
<dbReference type="EMBL" id="CP000948">
    <property type="protein sequence ID" value="ACB04011.1"/>
    <property type="molecule type" value="Genomic_DNA"/>
</dbReference>
<dbReference type="RefSeq" id="WP_001295378.1">
    <property type="nucleotide sequence ID" value="NC_010473.1"/>
</dbReference>
<dbReference type="SMR" id="B1XEJ5"/>
<dbReference type="GeneID" id="93779092"/>
<dbReference type="KEGG" id="ecd:ECDH10B_3083"/>
<dbReference type="HOGENOM" id="CLU_085336_1_0_6"/>
<dbReference type="GO" id="GO:0005829">
    <property type="term" value="C:cytosol"/>
    <property type="evidence" value="ECO:0007669"/>
    <property type="project" value="TreeGrafter"/>
</dbReference>
<dbReference type="FunFam" id="1.20.120.740:FF:000001">
    <property type="entry name" value="UPF0149 protein YgfB"/>
    <property type="match status" value="1"/>
</dbReference>
<dbReference type="Gene3D" id="1.20.120.740">
    <property type="entry name" value="YgfB uncharacterised protein family UPF0149, PF03695"/>
    <property type="match status" value="1"/>
</dbReference>
<dbReference type="HAMAP" id="MF_00346">
    <property type="entry name" value="UPF0149"/>
    <property type="match status" value="1"/>
</dbReference>
<dbReference type="InterPro" id="IPR011978">
    <property type="entry name" value="YgfB-like"/>
</dbReference>
<dbReference type="InterPro" id="IPR036255">
    <property type="entry name" value="YgfB-like_sf"/>
</dbReference>
<dbReference type="NCBIfam" id="NF002477">
    <property type="entry name" value="PRK01736.1"/>
    <property type="match status" value="1"/>
</dbReference>
<dbReference type="NCBIfam" id="TIGR02292">
    <property type="entry name" value="ygfB_yecA"/>
    <property type="match status" value="1"/>
</dbReference>
<dbReference type="PANTHER" id="PTHR37528">
    <property type="entry name" value="UPF0149 PROTEIN YGFB"/>
    <property type="match status" value="1"/>
</dbReference>
<dbReference type="PANTHER" id="PTHR37528:SF1">
    <property type="entry name" value="UPF0149 PROTEIN YGFB"/>
    <property type="match status" value="1"/>
</dbReference>
<dbReference type="Pfam" id="PF03695">
    <property type="entry name" value="UPF0149"/>
    <property type="match status" value="1"/>
</dbReference>
<dbReference type="SUPFAM" id="SSF101327">
    <property type="entry name" value="YgfB-like"/>
    <property type="match status" value="1"/>
</dbReference>
<evidence type="ECO:0000255" key="1">
    <source>
        <dbReference type="HAMAP-Rule" id="MF_00346"/>
    </source>
</evidence>
<proteinExistence type="inferred from homology"/>
<gene>
    <name evidence="1" type="primary">ygfB</name>
    <name type="ordered locus">ECDH10B_3083</name>
</gene>
<sequence>MSIQNEMPGYNEMNQYLNQQGTGLTPAEMHGLISGMICGGNDDSSWLPLLHDLTNEGMAFGHELAQALRKMHSATSDALQDDGFLFQLYLPDGDDVSVFDRADALAGWVNHFLLGLGVTQPKLDKVTGETGEAIDDLRNIAQLGYDEDEDQEELEMSLEEIIEYVRVAALLCHDTFTHPQPTAPEVQKPTLH</sequence>